<keyword id="KW-0175">Coiled coil</keyword>
<keyword id="KW-0496">Mitochondrion</keyword>
<keyword id="KW-1185">Reference proteome</keyword>
<protein>
    <recommendedName>
        <fullName>T-cell activation inhibitor, mitochondrial</fullName>
    </recommendedName>
    <alternativeName>
        <fullName>Tolerance-associated gene-1</fullName>
        <shortName>TOAG-1</shortName>
    </alternativeName>
</protein>
<reference key="1">
    <citation type="submission" date="2005-07" db="EMBL/GenBank/DDBJ databases">
        <authorList>
            <person name="Mural R.J."/>
            <person name="Adams M.D."/>
            <person name="Myers E.W."/>
            <person name="Smith H.O."/>
            <person name="Venter J.C."/>
        </authorList>
    </citation>
    <scope>NUCLEOTIDE SEQUENCE [LARGE SCALE GENOMIC DNA]</scope>
</reference>
<reference key="2">
    <citation type="journal article" date="2007" name="Am. J. Transplant.">
        <title>Identification of gene markers for the prediction of allograft rejection or permanent acceptance.</title>
        <authorList>
            <person name="Sawitzki B."/>
            <person name="Bushell A."/>
            <person name="Steger U."/>
            <person name="Jones N."/>
            <person name="Risch K."/>
            <person name="Siepert A."/>
            <person name="Lehmann M."/>
            <person name="Schmitt-Knosalla I."/>
            <person name="Vogt K."/>
            <person name="Gebuhr I."/>
            <person name="Wood K."/>
            <person name="Volk H.D."/>
        </authorList>
    </citation>
    <scope>TISSUE SPECIFICITY</scope>
    <scope>INDUCTION</scope>
</reference>
<dbReference type="EMBL" id="CH473954">
    <property type="protein sequence ID" value="EDL76792.1"/>
    <property type="molecule type" value="Genomic_DNA"/>
</dbReference>
<dbReference type="RefSeq" id="NP_001104308.1">
    <property type="nucleotide sequence ID" value="NM_001110838.1"/>
</dbReference>
<dbReference type="SMR" id="P0DKR2"/>
<dbReference type="FunCoup" id="P0DKR2">
    <property type="interactions" value="1101"/>
</dbReference>
<dbReference type="STRING" id="10116.ENSRNOP00000005440"/>
<dbReference type="PhosphoSitePlus" id="P0DKR2"/>
<dbReference type="PaxDb" id="10116-ENSRNOP00000005440"/>
<dbReference type="GeneID" id="363169"/>
<dbReference type="KEGG" id="rno:363169"/>
<dbReference type="AGR" id="RGD:1560717"/>
<dbReference type="CTD" id="285343"/>
<dbReference type="RGD" id="1560717">
    <property type="gene designation" value="Tcaim"/>
</dbReference>
<dbReference type="VEuPathDB" id="HostDB:ENSRNOG00000004085"/>
<dbReference type="eggNOG" id="ENOG502QTGC">
    <property type="taxonomic scope" value="Eukaryota"/>
</dbReference>
<dbReference type="HOGENOM" id="CLU_025230_0_0_1"/>
<dbReference type="InParanoid" id="P0DKR2"/>
<dbReference type="OrthoDB" id="4238at2759"/>
<dbReference type="PRO" id="PR:P0DKR2"/>
<dbReference type="Proteomes" id="UP000002494">
    <property type="component" value="Chromosome 8"/>
</dbReference>
<dbReference type="Proteomes" id="UP000234681">
    <property type="component" value="Chromosome 8"/>
</dbReference>
<dbReference type="Bgee" id="ENSRNOG00000004085">
    <property type="expression patterns" value="Expressed in adult mammalian kidney and 18 other cell types or tissues"/>
</dbReference>
<dbReference type="GO" id="GO:0005739">
    <property type="term" value="C:mitochondrion"/>
    <property type="evidence" value="ECO:0000266"/>
    <property type="project" value="RGD"/>
</dbReference>
<dbReference type="InterPro" id="IPR028031">
    <property type="entry name" value="DUF4460"/>
</dbReference>
<dbReference type="InterPro" id="IPR027989">
    <property type="entry name" value="DUF4461"/>
</dbReference>
<dbReference type="InterPro" id="IPR027986">
    <property type="entry name" value="TCAIM"/>
</dbReference>
<dbReference type="PANTHER" id="PTHR31596">
    <property type="entry name" value="T-CELL ACTIVATION INHIBITOR, MITOCHONDRIAL"/>
    <property type="match status" value="1"/>
</dbReference>
<dbReference type="PANTHER" id="PTHR31596:SF1">
    <property type="entry name" value="T-CELL ACTIVATION INHIBITOR, MITOCHONDRIAL"/>
    <property type="match status" value="1"/>
</dbReference>
<dbReference type="Pfam" id="PF14687">
    <property type="entry name" value="DUF4460"/>
    <property type="match status" value="1"/>
</dbReference>
<dbReference type="Pfam" id="PF14688">
    <property type="entry name" value="DUF4461"/>
    <property type="match status" value="1"/>
</dbReference>
<organism>
    <name type="scientific">Rattus norvegicus</name>
    <name type="common">Rat</name>
    <dbReference type="NCBI Taxonomy" id="10116"/>
    <lineage>
        <taxon>Eukaryota</taxon>
        <taxon>Metazoa</taxon>
        <taxon>Chordata</taxon>
        <taxon>Craniata</taxon>
        <taxon>Vertebrata</taxon>
        <taxon>Euteleostomi</taxon>
        <taxon>Mammalia</taxon>
        <taxon>Eutheria</taxon>
        <taxon>Euarchontoglires</taxon>
        <taxon>Glires</taxon>
        <taxon>Rodentia</taxon>
        <taxon>Myomorpha</taxon>
        <taxon>Muroidea</taxon>
        <taxon>Muridae</taxon>
        <taxon>Murinae</taxon>
        <taxon>Rattus</taxon>
    </lineage>
</organism>
<feature type="chain" id="PRO_0000420264" description="T-cell activation inhibitor, mitochondrial">
    <location>
        <begin position="1"/>
        <end position="505"/>
    </location>
</feature>
<feature type="coiled-coil region" evidence="2">
    <location>
        <begin position="216"/>
        <end position="243"/>
    </location>
</feature>
<gene>
    <name type="primary">Tcaim</name>
    <name type="synonym">Toag1</name>
</gene>
<evidence type="ECO:0000250" key="1"/>
<evidence type="ECO:0000255" key="2"/>
<evidence type="ECO:0000269" key="3">
    <source>
    </source>
</evidence>
<name>TCAIM_RAT</name>
<proteinExistence type="evidence at transcript level"/>
<sequence>MLGSWRAFSEMFCHLRPWRRFCLRKVLPPWLHYSRALSGAEAINALRPFYFAVHPDFFGQHPREREVNENSLKRLSVYLENLQKPGFKSLKPTQLTFYIREKTAQNSSEGQEPVSTTGFRAVRFTLHSSDLLSTVLYILNSCSLPVEHVQSLNTNVHSQPLKEATGMPDRPIKWHRSYYSFTGFKDPDEDLEHVSRVETTLTSWLGSNGKGAVKKLKNSLPLRKELDRLKNELSELLQLSDIRWQRGWGVAHRCSQLHSLSRLAQQNLEPLQNAKGCTIVFTDRSGMSALGHVMLGTMDVHHHWTRLFESLPNYFDLQRRMSALEDQISHLLGGIQVVYIEELQPALTLDEYYSLLDTFYNQLQRSRAPPRPQSLSGLQMILSRYAPSLHELGHFNIPALSDPASLQSFMRTKAQQARENMRRREKLKVIENELIQASTRKFSLEKLYKEPSISSRQMVDCCKRLLEQSLPYLHGMHLCVSHFYSVMQDGDLCIPWNWKKGEAMK</sequence>
<comment type="function">
    <text evidence="1">May regulate T-cell apoptosis.</text>
</comment>
<comment type="subcellular location">
    <subcellularLocation>
        <location evidence="1">Mitochondrion</location>
    </subcellularLocation>
</comment>
<comment type="tissue specificity">
    <text evidence="3">Expressed in peripheral blood leukocytes, mainly in T-lymphocytes.</text>
</comment>
<comment type="induction">
    <text evidence="3">Up-regulated during induction and maintenance of graft acceptance and down-regulated during graft rejection.</text>
</comment>
<accession>P0DKR2</accession>
<accession>A6I484</accession>